<evidence type="ECO:0000255" key="1">
    <source>
        <dbReference type="HAMAP-Rule" id="MF_01552"/>
    </source>
</evidence>
<keyword id="KW-0067">ATP-binding</keyword>
<keyword id="KW-0436">Ligase</keyword>
<keyword id="KW-0460">Magnesium</keyword>
<keyword id="KW-0464">Manganese</keyword>
<keyword id="KW-0479">Metal-binding</keyword>
<keyword id="KW-0547">Nucleotide-binding</keyword>
<keyword id="KW-0648">Protein biosynthesis</keyword>
<keyword id="KW-1185">Reference proteome</keyword>
<organism>
    <name type="scientific">Shewanella denitrificans (strain OS217 / ATCC BAA-1090 / DSM 15013)</name>
    <dbReference type="NCBI Taxonomy" id="318161"/>
    <lineage>
        <taxon>Bacteria</taxon>
        <taxon>Pseudomonadati</taxon>
        <taxon>Pseudomonadota</taxon>
        <taxon>Gammaproteobacteria</taxon>
        <taxon>Alteromonadales</taxon>
        <taxon>Shewanellaceae</taxon>
        <taxon>Shewanella</taxon>
    </lineage>
</organism>
<comment type="cofactor">
    <cofactor evidence="1">
        <name>Mg(2+)</name>
        <dbReference type="ChEBI" id="CHEBI:18420"/>
    </cofactor>
    <cofactor evidence="1">
        <name>Mn(2+)</name>
        <dbReference type="ChEBI" id="CHEBI:29035"/>
    </cofactor>
    <text evidence="1">Binds 2 magnesium or manganese ions per subunit.</text>
</comment>
<comment type="similarity">
    <text evidence="1">Belongs to the RimK family.</text>
</comment>
<reference key="1">
    <citation type="submission" date="2006-03" db="EMBL/GenBank/DDBJ databases">
        <title>Complete sequence of Shewanella denitrificans OS217.</title>
        <authorList>
            <consortium name="US DOE Joint Genome Institute"/>
            <person name="Copeland A."/>
            <person name="Lucas S."/>
            <person name="Lapidus A."/>
            <person name="Barry K."/>
            <person name="Detter J.C."/>
            <person name="Glavina del Rio T."/>
            <person name="Hammon N."/>
            <person name="Israni S."/>
            <person name="Dalin E."/>
            <person name="Tice H."/>
            <person name="Pitluck S."/>
            <person name="Brettin T."/>
            <person name="Bruce D."/>
            <person name="Han C."/>
            <person name="Tapia R."/>
            <person name="Gilna P."/>
            <person name="Kiss H."/>
            <person name="Schmutz J."/>
            <person name="Larimer F."/>
            <person name="Land M."/>
            <person name="Hauser L."/>
            <person name="Kyrpides N."/>
            <person name="Lykidis A."/>
            <person name="Richardson P."/>
        </authorList>
    </citation>
    <scope>NUCLEOTIDE SEQUENCE [LARGE SCALE GENOMIC DNA]</scope>
    <source>
        <strain>OS217 / ATCC BAA-1090 / DSM 15013</strain>
    </source>
</reference>
<gene>
    <name evidence="1" type="primary">rimK2</name>
    <name type="ordered locus">Sden_2640</name>
</gene>
<name>RIMK2_SHEDO</name>
<sequence>MHIAIMSRNKNLYSTRRLKEAAIARGHDVKVVDHISCYMNINMTSPSIHMKGVELPKFDAVIPRIGASVTFYGTAVLRQFEMMGVHPLNESVAITRSRDKLRSLQLLSRKSIGLPVTGFANKPSDVPDLLDMVGGAPCVIKLLEGTQGIGVVLAETRKAAESVIEAFMGLKANIMVQEYIKEAGGADIRCFVIGDKVIAAMKRQALPGEFRSNLHRGGSATIVKLTPEERSTALRAAKTMGLNVAGVDILRSKHGPLVMEVNSSPGLEGIEKATGIDVADKIIQFIEKNVKATSTKTKGVG</sequence>
<protein>
    <recommendedName>
        <fullName evidence="1">Probable alpha-L-glutamate ligase 2</fullName>
        <ecNumber evidence="1">6.3.2.-</ecNumber>
    </recommendedName>
</protein>
<proteinExistence type="inferred from homology"/>
<accession>Q12KV7</accession>
<feature type="chain" id="PRO_0000340555" description="Probable alpha-L-glutamate ligase 2">
    <location>
        <begin position="1"/>
        <end position="301"/>
    </location>
</feature>
<feature type="domain" description="ATP-grasp" evidence="1">
    <location>
        <begin position="104"/>
        <end position="287"/>
    </location>
</feature>
<feature type="binding site" evidence="1">
    <location>
        <position position="141"/>
    </location>
    <ligand>
        <name>ATP</name>
        <dbReference type="ChEBI" id="CHEBI:30616"/>
    </ligand>
</feature>
<feature type="binding site" evidence="1">
    <location>
        <begin position="178"/>
        <end position="179"/>
    </location>
    <ligand>
        <name>ATP</name>
        <dbReference type="ChEBI" id="CHEBI:30616"/>
    </ligand>
</feature>
<feature type="binding site" evidence="1">
    <location>
        <position position="187"/>
    </location>
    <ligand>
        <name>ATP</name>
        <dbReference type="ChEBI" id="CHEBI:30616"/>
    </ligand>
</feature>
<feature type="binding site" evidence="1">
    <location>
        <begin position="211"/>
        <end position="213"/>
    </location>
    <ligand>
        <name>ATP</name>
        <dbReference type="ChEBI" id="CHEBI:30616"/>
    </ligand>
</feature>
<feature type="binding site" evidence="1">
    <location>
        <position position="248"/>
    </location>
    <ligand>
        <name>Mg(2+)</name>
        <dbReference type="ChEBI" id="CHEBI:18420"/>
        <label>1</label>
    </ligand>
</feature>
<feature type="binding site" evidence="1">
    <location>
        <position position="248"/>
    </location>
    <ligand>
        <name>Mn(2+)</name>
        <dbReference type="ChEBI" id="CHEBI:29035"/>
        <label>1</label>
    </ligand>
</feature>
<feature type="binding site" evidence="1">
    <location>
        <position position="260"/>
    </location>
    <ligand>
        <name>Mg(2+)</name>
        <dbReference type="ChEBI" id="CHEBI:18420"/>
        <label>1</label>
    </ligand>
</feature>
<feature type="binding site" evidence="1">
    <location>
        <position position="260"/>
    </location>
    <ligand>
        <name>Mg(2+)</name>
        <dbReference type="ChEBI" id="CHEBI:18420"/>
        <label>2</label>
    </ligand>
</feature>
<feature type="binding site" evidence="1">
    <location>
        <position position="260"/>
    </location>
    <ligand>
        <name>Mn(2+)</name>
        <dbReference type="ChEBI" id="CHEBI:29035"/>
        <label>1</label>
    </ligand>
</feature>
<feature type="binding site" evidence="1">
    <location>
        <position position="260"/>
    </location>
    <ligand>
        <name>Mn(2+)</name>
        <dbReference type="ChEBI" id="CHEBI:29035"/>
        <label>2</label>
    </ligand>
</feature>
<feature type="binding site" evidence="1">
    <location>
        <position position="262"/>
    </location>
    <ligand>
        <name>Mg(2+)</name>
        <dbReference type="ChEBI" id="CHEBI:18420"/>
        <label>2</label>
    </ligand>
</feature>
<feature type="binding site" evidence="1">
    <location>
        <position position="262"/>
    </location>
    <ligand>
        <name>Mn(2+)</name>
        <dbReference type="ChEBI" id="CHEBI:29035"/>
        <label>2</label>
    </ligand>
</feature>
<dbReference type="EC" id="6.3.2.-" evidence="1"/>
<dbReference type="EMBL" id="CP000302">
    <property type="protein sequence ID" value="ABE55919.1"/>
    <property type="molecule type" value="Genomic_DNA"/>
</dbReference>
<dbReference type="RefSeq" id="WP_011497070.1">
    <property type="nucleotide sequence ID" value="NC_007954.1"/>
</dbReference>
<dbReference type="SMR" id="Q12KV7"/>
<dbReference type="STRING" id="318161.Sden_2640"/>
<dbReference type="DNASU" id="4019157"/>
<dbReference type="KEGG" id="sdn:Sden_2640"/>
<dbReference type="eggNOG" id="COG0189">
    <property type="taxonomic scope" value="Bacteria"/>
</dbReference>
<dbReference type="HOGENOM" id="CLU_054353_0_1_6"/>
<dbReference type="OrthoDB" id="3865600at2"/>
<dbReference type="Proteomes" id="UP000001982">
    <property type="component" value="Chromosome"/>
</dbReference>
<dbReference type="GO" id="GO:0005737">
    <property type="term" value="C:cytoplasm"/>
    <property type="evidence" value="ECO:0007669"/>
    <property type="project" value="TreeGrafter"/>
</dbReference>
<dbReference type="GO" id="GO:0005524">
    <property type="term" value="F:ATP binding"/>
    <property type="evidence" value="ECO:0007669"/>
    <property type="project" value="UniProtKB-UniRule"/>
</dbReference>
<dbReference type="GO" id="GO:0046872">
    <property type="term" value="F:metal ion binding"/>
    <property type="evidence" value="ECO:0007669"/>
    <property type="project" value="UniProtKB-KW"/>
</dbReference>
<dbReference type="GO" id="GO:0018169">
    <property type="term" value="F:ribosomal S6-glutamic acid ligase activity"/>
    <property type="evidence" value="ECO:0007669"/>
    <property type="project" value="TreeGrafter"/>
</dbReference>
<dbReference type="GO" id="GO:0036211">
    <property type="term" value="P:protein modification process"/>
    <property type="evidence" value="ECO:0007669"/>
    <property type="project" value="InterPro"/>
</dbReference>
<dbReference type="GO" id="GO:0009432">
    <property type="term" value="P:SOS response"/>
    <property type="evidence" value="ECO:0007669"/>
    <property type="project" value="TreeGrafter"/>
</dbReference>
<dbReference type="GO" id="GO:0006412">
    <property type="term" value="P:translation"/>
    <property type="evidence" value="ECO:0007669"/>
    <property type="project" value="UniProtKB-KW"/>
</dbReference>
<dbReference type="FunFam" id="3.40.50.20:FF:000004">
    <property type="entry name" value="Probable alpha-L-glutamate ligase"/>
    <property type="match status" value="1"/>
</dbReference>
<dbReference type="FunFam" id="3.30.1490.20:FF:000005">
    <property type="entry name" value="Probable alpha-L-glutamate ligase 1"/>
    <property type="match status" value="1"/>
</dbReference>
<dbReference type="FunFam" id="3.30.470.20:FF:000016">
    <property type="entry name" value="Ribosomal protein S6--L-glutamate ligase"/>
    <property type="match status" value="1"/>
</dbReference>
<dbReference type="Gene3D" id="3.40.50.20">
    <property type="match status" value="1"/>
</dbReference>
<dbReference type="Gene3D" id="3.30.1490.20">
    <property type="entry name" value="ATP-grasp fold, A domain"/>
    <property type="match status" value="1"/>
</dbReference>
<dbReference type="Gene3D" id="3.30.470.20">
    <property type="entry name" value="ATP-grasp fold, B domain"/>
    <property type="match status" value="1"/>
</dbReference>
<dbReference type="HAMAP" id="MF_01552">
    <property type="entry name" value="RimK"/>
    <property type="match status" value="1"/>
</dbReference>
<dbReference type="InterPro" id="IPR011761">
    <property type="entry name" value="ATP-grasp"/>
</dbReference>
<dbReference type="InterPro" id="IPR013651">
    <property type="entry name" value="ATP-grasp_RimK-type"/>
</dbReference>
<dbReference type="InterPro" id="IPR013815">
    <property type="entry name" value="ATP_grasp_subdomain_1"/>
</dbReference>
<dbReference type="InterPro" id="IPR023533">
    <property type="entry name" value="RimK"/>
</dbReference>
<dbReference type="InterPro" id="IPR041107">
    <property type="entry name" value="Rimk_N"/>
</dbReference>
<dbReference type="InterPro" id="IPR004666">
    <property type="entry name" value="Rp_bS6_RimK/Lys_biosynth_LsyX"/>
</dbReference>
<dbReference type="NCBIfam" id="NF007764">
    <property type="entry name" value="PRK10446.1"/>
    <property type="match status" value="1"/>
</dbReference>
<dbReference type="NCBIfam" id="TIGR00768">
    <property type="entry name" value="rimK_fam"/>
    <property type="match status" value="1"/>
</dbReference>
<dbReference type="PANTHER" id="PTHR21621:SF7">
    <property type="entry name" value="RIBOSOMAL PROTEIN BS6--L-GLUTAMATE LIGASE"/>
    <property type="match status" value="1"/>
</dbReference>
<dbReference type="PANTHER" id="PTHR21621">
    <property type="entry name" value="RIBOSOMAL PROTEIN S6 MODIFICATION PROTEIN"/>
    <property type="match status" value="1"/>
</dbReference>
<dbReference type="Pfam" id="PF08443">
    <property type="entry name" value="RimK"/>
    <property type="match status" value="1"/>
</dbReference>
<dbReference type="Pfam" id="PF18030">
    <property type="entry name" value="Rimk_N"/>
    <property type="match status" value="1"/>
</dbReference>
<dbReference type="SUPFAM" id="SSF56059">
    <property type="entry name" value="Glutathione synthetase ATP-binding domain-like"/>
    <property type="match status" value="1"/>
</dbReference>
<dbReference type="PROSITE" id="PS50975">
    <property type="entry name" value="ATP_GRASP"/>
    <property type="match status" value="1"/>
</dbReference>